<reference key="1">
    <citation type="journal article" date="2007" name="Proc. Natl. Acad. Sci. U.S.A.">
        <title>Genome sequencing and comparative analysis of Saccharomyces cerevisiae strain YJM789.</title>
        <authorList>
            <person name="Wei W."/>
            <person name="McCusker J.H."/>
            <person name="Hyman R.W."/>
            <person name="Jones T."/>
            <person name="Ning Y."/>
            <person name="Cao Z."/>
            <person name="Gu Z."/>
            <person name="Bruno D."/>
            <person name="Miranda M."/>
            <person name="Nguyen M."/>
            <person name="Wilhelmy J."/>
            <person name="Komp C."/>
            <person name="Tamse R."/>
            <person name="Wang X."/>
            <person name="Jia P."/>
            <person name="Luedi P."/>
            <person name="Oefner P.J."/>
            <person name="David L."/>
            <person name="Dietrich F.S."/>
            <person name="Li Y."/>
            <person name="Davis R.W."/>
            <person name="Steinmetz L.M."/>
        </authorList>
    </citation>
    <scope>NUCLEOTIDE SEQUENCE [LARGE SCALE GENOMIC DNA]</scope>
    <source>
        <strain>YJM789</strain>
    </source>
</reference>
<organism>
    <name type="scientific">Saccharomyces cerevisiae (strain YJM789)</name>
    <name type="common">Baker's yeast</name>
    <dbReference type="NCBI Taxonomy" id="307796"/>
    <lineage>
        <taxon>Eukaryota</taxon>
        <taxon>Fungi</taxon>
        <taxon>Dikarya</taxon>
        <taxon>Ascomycota</taxon>
        <taxon>Saccharomycotina</taxon>
        <taxon>Saccharomycetes</taxon>
        <taxon>Saccharomycetales</taxon>
        <taxon>Saccharomycetaceae</taxon>
        <taxon>Saccharomyces</taxon>
    </lineage>
</organism>
<dbReference type="EMBL" id="AAFW02000067">
    <property type="protein sequence ID" value="EDN62722.1"/>
    <property type="molecule type" value="Genomic_DNA"/>
</dbReference>
<dbReference type="SMR" id="A6ZRZ0"/>
<dbReference type="HOGENOM" id="CLU_267374_0_0_1"/>
<dbReference type="OrthoDB" id="37090at4893"/>
<dbReference type="Proteomes" id="UP000007060">
    <property type="component" value="Unassembled WGS sequence"/>
</dbReference>
<dbReference type="GO" id="GO:0005737">
    <property type="term" value="C:cytoplasm"/>
    <property type="evidence" value="ECO:0007669"/>
    <property type="project" value="UniProtKB-SubCell"/>
</dbReference>
<dbReference type="InterPro" id="IPR051195">
    <property type="entry name" value="Fungal_stress_NST1"/>
</dbReference>
<dbReference type="InterPro" id="IPR025279">
    <property type="entry name" value="NST1"/>
</dbReference>
<dbReference type="PANTHER" id="PTHR31780:SF10">
    <property type="entry name" value="LD36051P"/>
    <property type="match status" value="1"/>
</dbReference>
<dbReference type="PANTHER" id="PTHR31780">
    <property type="entry name" value="STRESS RESPONSE PROTEIN NST1-RELATED"/>
    <property type="match status" value="1"/>
</dbReference>
<dbReference type="Pfam" id="PF13945">
    <property type="entry name" value="NST1"/>
    <property type="match status" value="1"/>
</dbReference>
<evidence type="ECO:0000250" key="1"/>
<evidence type="ECO:0000250" key="2">
    <source>
        <dbReference type="UniProtKB" id="P53935"/>
    </source>
</evidence>
<evidence type="ECO:0000255" key="3"/>
<evidence type="ECO:0000256" key="4">
    <source>
        <dbReference type="SAM" id="MobiDB-lite"/>
    </source>
</evidence>
<evidence type="ECO:0000305" key="5"/>
<keyword id="KW-0175">Coiled coil</keyword>
<keyword id="KW-0963">Cytoplasm</keyword>
<keyword id="KW-0597">Phosphoprotein</keyword>
<keyword id="KW-0346">Stress response</keyword>
<name>NST1_YEAS7</name>
<feature type="chain" id="PRO_0000324463" description="Stress response protein NST1">
    <location>
        <begin position="1"/>
        <end position="1240"/>
    </location>
</feature>
<feature type="region of interest" description="Disordered" evidence="4">
    <location>
        <begin position="1"/>
        <end position="76"/>
    </location>
</feature>
<feature type="region of interest" description="Disordered" evidence="4">
    <location>
        <begin position="446"/>
        <end position="593"/>
    </location>
</feature>
<feature type="region of interest" description="Disordered" evidence="4">
    <location>
        <begin position="634"/>
        <end position="744"/>
    </location>
</feature>
<feature type="region of interest" description="Disordered" evidence="4">
    <location>
        <begin position="953"/>
        <end position="980"/>
    </location>
</feature>
<feature type="region of interest" description="Disordered" evidence="4">
    <location>
        <begin position="998"/>
        <end position="1029"/>
    </location>
</feature>
<feature type="region of interest" description="Disordered" evidence="4">
    <location>
        <begin position="1214"/>
        <end position="1240"/>
    </location>
</feature>
<feature type="coiled-coil region" evidence="3">
    <location>
        <begin position="616"/>
        <end position="777"/>
    </location>
</feature>
<feature type="compositionally biased region" description="Basic residues" evidence="4">
    <location>
        <begin position="1"/>
        <end position="20"/>
    </location>
</feature>
<feature type="compositionally biased region" description="Polar residues" evidence="4">
    <location>
        <begin position="25"/>
        <end position="34"/>
    </location>
</feature>
<feature type="compositionally biased region" description="Basic and acidic residues" evidence="4">
    <location>
        <begin position="39"/>
        <end position="48"/>
    </location>
</feature>
<feature type="compositionally biased region" description="Acidic residues" evidence="4">
    <location>
        <begin position="457"/>
        <end position="487"/>
    </location>
</feature>
<feature type="compositionally biased region" description="Basic and acidic residues" evidence="4">
    <location>
        <begin position="488"/>
        <end position="513"/>
    </location>
</feature>
<feature type="compositionally biased region" description="Basic residues" evidence="4">
    <location>
        <begin position="514"/>
        <end position="524"/>
    </location>
</feature>
<feature type="compositionally biased region" description="Acidic residues" evidence="4">
    <location>
        <begin position="558"/>
        <end position="587"/>
    </location>
</feature>
<feature type="compositionally biased region" description="Polar residues" evidence="4">
    <location>
        <begin position="953"/>
        <end position="965"/>
    </location>
</feature>
<feature type="modified residue" description="Phosphoserine" evidence="2">
    <location>
        <position position="266"/>
    </location>
</feature>
<sequence>MPPNSKSKRRKNKSKQHNKKNGNSDPEQSINPTQLVPRMEPELYHTESDYPTSRVIKRAPNGDVIVEPINTDDDKKERTANLTHNKDSMDSASSLAFTLDSHWESLSPEEKKTILRIEKEEVFNVIRNYQDDHSCSCSVCGRRHLAMDQEMERIYNTLYAMDKDKDPETNPIKFHLGIIKELQISKNQQQNDLSSTKGEVVKNFLSSSTVGSLKEEVLHFKQKQLSKQEQAHNETADNTSLLEENLNNIHINKTSSEISANFNSVSDEELQQKYSNFTKTFISSHPKIAEEYVQKMMMYPNIRALTDDLMNSNGQGFLNAIEDFVRDGQIQASKKDDSITEDEASSTDLTDPKEFTTMLHSGKPLTEDEYADLQRNIAERMTNAYDTASKKFKDVSQLEKELFTRFMSGRDKKSFRELIIQSFKNKFDGELGPSVLAATLSSCFSSQSKDTSLDTDSIYEDEDEEDYDDYSEYAEDSEEVSEYEGIEAVEKPEHDEKSNGIRETLHLSYDHDHKRQNHPHHHYHSTSTHSEDELSEEEYISDIELPHDPHKHFHRDDDILDGDEDEPEEEDENEGDDEEDTYDSGLDETDRLEEGRKLIQIAITKLLQSRIMASYHEKQADNNRLKLLQELEEEKRKKREKEEKKQKKREKEKEKKRLQQLAKEEEKRKREEEKERLKKELEEREMRRREAQRKKVEEAKRKKDEERKRRLEEQQRREEMQEKQRKQKEELKRKREEEKKRIREQKRLEQEKLQKEKEEEERQRLIAEDALRKQKLNEEQTSANILSAKPFTENGVGNPVSSQSHPNMTNYQEDNSCSINDEILKMVNSVAASKPVSPTGFNVHDLLLPSTNNQMPAMEQSHLSQPGNQNNHFGTTTIPNALDLATKSSLQTENNYLMNSQTLENTSLLMHNNSSPTKLLPNDFGLSSWGGLTNTMSINPTCKPPVIQTSEMKSQAHKSSPQATMPSFGLPNGGTHRKSFTDELNTLTSMLSSSGFADTSLSSSGFPPSQRSVWNDQKSSFSGPSTAGNFNNSSIQSGMLLAPTLGSVESFPNRTSIWDSSTTPMMNKSELSGRNITSTAQDSPAFMASNIWSSNSQYNSPYLTSNVLQSPQISSGVDESHILDSIYNTYLAISPQDSLNPYIAIGTLFQNLVGLNLDYSTFINKLISMQGAYNCEFFTDNNGSITHVRFARQTPAGHSKGLLNQLFSGLNDPTATPFTSRPHTSTGASFPIASSTTQTS</sequence>
<protein>
    <recommendedName>
        <fullName>Stress response protein NST1</fullName>
    </recommendedName>
    <alternativeName>
        <fullName>Negatively-affecting salt tolerance protein 1</fullName>
    </alternativeName>
</protein>
<accession>A6ZRZ0</accession>
<comment type="function">
    <text evidence="1">With MSL1, acts as a negative regulator of salt tolerance.</text>
</comment>
<comment type="subunit">
    <text evidence="1">Interacts with MSL1.</text>
</comment>
<comment type="subcellular location">
    <subcellularLocation>
        <location evidence="1">Cytoplasm</location>
    </subcellularLocation>
</comment>
<comment type="similarity">
    <text evidence="5">Belongs to the NST1 family.</text>
</comment>
<proteinExistence type="inferred from homology"/>
<gene>
    <name type="primary">NST1</name>
    <name type="ORF">SCY_4701</name>
</gene>